<name>U390_CRYNJ</name>
<proteinExistence type="inferred from homology"/>
<sequence length="97" mass="10350">MAQGAGKSIKAKGKSGGSQRKNTGKTKPGKREVAPKDRQRVLERSQKKQLSSKINNSIEKQMVQAASVGKLSIMRNVGELESGEGKDGKAKGKGKSR</sequence>
<comment type="similarity">
    <text evidence="2">Belongs to the UPF0390 family.</text>
</comment>
<reference key="1">
    <citation type="journal article" date="2005" name="Science">
        <title>The genome of the basidiomycetous yeast and human pathogen Cryptococcus neoformans.</title>
        <authorList>
            <person name="Loftus B.J."/>
            <person name="Fung E."/>
            <person name="Roncaglia P."/>
            <person name="Rowley D."/>
            <person name="Amedeo P."/>
            <person name="Bruno D."/>
            <person name="Vamathevan J."/>
            <person name="Miranda M."/>
            <person name="Anderson I.J."/>
            <person name="Fraser J.A."/>
            <person name="Allen J.E."/>
            <person name="Bosdet I.E."/>
            <person name="Brent M.R."/>
            <person name="Chiu R."/>
            <person name="Doering T.L."/>
            <person name="Donlin M.J."/>
            <person name="D'Souza C.A."/>
            <person name="Fox D.S."/>
            <person name="Grinberg V."/>
            <person name="Fu J."/>
            <person name="Fukushima M."/>
            <person name="Haas B.J."/>
            <person name="Huang J.C."/>
            <person name="Janbon G."/>
            <person name="Jones S.J.M."/>
            <person name="Koo H.L."/>
            <person name="Krzywinski M.I."/>
            <person name="Kwon-Chung K.J."/>
            <person name="Lengeler K.B."/>
            <person name="Maiti R."/>
            <person name="Marra M.A."/>
            <person name="Marra R.E."/>
            <person name="Mathewson C.A."/>
            <person name="Mitchell T.G."/>
            <person name="Pertea M."/>
            <person name="Riggs F.R."/>
            <person name="Salzberg S.L."/>
            <person name="Schein J.E."/>
            <person name="Shvartsbeyn A."/>
            <person name="Shin H."/>
            <person name="Shumway M."/>
            <person name="Specht C.A."/>
            <person name="Suh B.B."/>
            <person name="Tenney A."/>
            <person name="Utterback T.R."/>
            <person name="Wickes B.L."/>
            <person name="Wortman J.R."/>
            <person name="Wye N.H."/>
            <person name="Kronstad J.W."/>
            <person name="Lodge J.K."/>
            <person name="Heitman J."/>
            <person name="Davis R.W."/>
            <person name="Fraser C.M."/>
            <person name="Hyman R.W."/>
        </authorList>
    </citation>
    <scope>NUCLEOTIDE SEQUENCE [LARGE SCALE GENOMIC DNA]</scope>
    <source>
        <strain>JEC21 / ATCC MYA-565</strain>
    </source>
</reference>
<dbReference type="EMBL" id="AE017344">
    <property type="protein sequence ID" value="AAW42766.1"/>
    <property type="molecule type" value="Genomic_DNA"/>
</dbReference>
<dbReference type="RefSeq" id="XP_024512611.1">
    <property type="nucleotide sequence ID" value="XM_024657081.1"/>
</dbReference>
<dbReference type="RefSeq" id="XP_570073.1">
    <property type="nucleotide sequence ID" value="XM_570073.1"/>
</dbReference>
<dbReference type="SMR" id="P0CS20"/>
<dbReference type="STRING" id="214684.P0CS20"/>
<dbReference type="PaxDb" id="214684-P0CS20"/>
<dbReference type="EnsemblFungi" id="AAW42766">
    <property type="protein sequence ID" value="AAW42766"/>
    <property type="gene ID" value="CND04920"/>
</dbReference>
<dbReference type="GeneID" id="3257044"/>
<dbReference type="VEuPathDB" id="FungiDB:CND04920"/>
<dbReference type="eggNOG" id="ENOG502SEA1">
    <property type="taxonomic scope" value="Eukaryota"/>
</dbReference>
<dbReference type="HOGENOM" id="CLU_157438_1_1_1"/>
<dbReference type="InParanoid" id="P0CS20"/>
<dbReference type="OMA" id="IMKNVAM"/>
<dbReference type="OrthoDB" id="5239630at2759"/>
<dbReference type="Proteomes" id="UP000002149">
    <property type="component" value="Chromosome 4"/>
</dbReference>
<dbReference type="InterPro" id="IPR019034">
    <property type="entry name" value="UPF0390"/>
</dbReference>
<dbReference type="Pfam" id="PF09495">
    <property type="entry name" value="DUF2462"/>
    <property type="match status" value="1"/>
</dbReference>
<keyword id="KW-1185">Reference proteome</keyword>
<organism>
    <name type="scientific">Cryptococcus neoformans var. neoformans serotype D (strain JEC21 / ATCC MYA-565)</name>
    <name type="common">Filobasidiella neoformans</name>
    <dbReference type="NCBI Taxonomy" id="214684"/>
    <lineage>
        <taxon>Eukaryota</taxon>
        <taxon>Fungi</taxon>
        <taxon>Dikarya</taxon>
        <taxon>Basidiomycota</taxon>
        <taxon>Agaricomycotina</taxon>
        <taxon>Tremellomycetes</taxon>
        <taxon>Tremellales</taxon>
        <taxon>Cryptococcaceae</taxon>
        <taxon>Cryptococcus</taxon>
        <taxon>Cryptococcus neoformans species complex</taxon>
    </lineage>
</organism>
<feature type="chain" id="PRO_0000255472" description="UPF0390 protein CND04920">
    <location>
        <begin position="1"/>
        <end position="97"/>
    </location>
</feature>
<feature type="region of interest" description="Disordered" evidence="1">
    <location>
        <begin position="1"/>
        <end position="57"/>
    </location>
</feature>
<feature type="region of interest" description="Disordered" evidence="1">
    <location>
        <begin position="75"/>
        <end position="97"/>
    </location>
</feature>
<feature type="compositionally biased region" description="Basic and acidic residues" evidence="1">
    <location>
        <begin position="29"/>
        <end position="46"/>
    </location>
</feature>
<feature type="compositionally biased region" description="Polar residues" evidence="1">
    <location>
        <begin position="48"/>
        <end position="57"/>
    </location>
</feature>
<protein>
    <recommendedName>
        <fullName>UPF0390 protein CND04920</fullName>
    </recommendedName>
</protein>
<gene>
    <name type="ordered locus">CND04920</name>
</gene>
<accession>P0CS20</accession>
<accession>Q55UG4</accession>
<accession>Q5KHY0</accession>
<evidence type="ECO:0000256" key="1">
    <source>
        <dbReference type="SAM" id="MobiDB-lite"/>
    </source>
</evidence>
<evidence type="ECO:0000305" key="2"/>